<comment type="function">
    <text evidence="1">Involved in nucleolar processing of pre-18S ribosomal RNA. Involved in ribosome biosynthesis (By similarity).</text>
</comment>
<comment type="subunit">
    <text evidence="1">Component of the ribosomal small subunit (SSU) processome.</text>
</comment>
<comment type="subcellular location">
    <subcellularLocation>
        <location evidence="1 2">Nucleus</location>
        <location evidence="1 2">Nucleolus</location>
    </subcellularLocation>
    <subcellularLocation>
        <location evidence="2">Membrane</location>
        <topology evidence="2">Multi-pass membrane protein</topology>
    </subcellularLocation>
</comment>
<comment type="similarity">
    <text evidence="3">Belongs to the HEATR1/UTP10 family.</text>
</comment>
<accession>Q4WLI9</accession>
<feature type="chain" id="PRO_0000308494" description="U3 small nucleolar RNA-associated protein 10">
    <location>
        <begin position="1"/>
        <end position="1798"/>
    </location>
</feature>
<feature type="transmembrane region" description="Helical" evidence="2">
    <location>
        <begin position="942"/>
        <end position="962"/>
    </location>
</feature>
<feature type="transmembrane region" description="Helical" evidence="2">
    <location>
        <begin position="998"/>
        <end position="1018"/>
    </location>
</feature>
<feature type="repeat" description="HEAT 1" evidence="2">
    <location>
        <begin position="583"/>
        <end position="620"/>
    </location>
</feature>
<feature type="repeat" description="HEAT 2" evidence="2">
    <location>
        <begin position="1042"/>
        <end position="1079"/>
    </location>
</feature>
<feature type="repeat" description="HEAT 3" evidence="2">
    <location>
        <begin position="1249"/>
        <end position="1286"/>
    </location>
</feature>
<feature type="repeat" description="HEAT 4" evidence="2">
    <location>
        <begin position="1293"/>
        <end position="1331"/>
    </location>
</feature>
<feature type="repeat" description="HEAT 5" evidence="2">
    <location>
        <begin position="1754"/>
        <end position="1791"/>
    </location>
</feature>
<evidence type="ECO:0000250" key="1">
    <source>
        <dbReference type="UniProtKB" id="P42945"/>
    </source>
</evidence>
<evidence type="ECO:0000255" key="2"/>
<evidence type="ECO:0000305" key="3"/>
<evidence type="ECO:0000312" key="4">
    <source>
        <dbReference type="EMBL" id="EAL89175.1"/>
    </source>
</evidence>
<protein>
    <recommendedName>
        <fullName>U3 small nucleolar RNA-associated protein 10</fullName>
    </recommendedName>
</protein>
<reference evidence="4" key="1">
    <citation type="journal article" date="2005" name="Nature">
        <title>Genomic sequence of the pathogenic and allergenic filamentous fungus Aspergillus fumigatus.</title>
        <authorList>
            <person name="Nierman W.C."/>
            <person name="Pain A."/>
            <person name="Anderson M.J."/>
            <person name="Wortman J.R."/>
            <person name="Kim H.S."/>
            <person name="Arroyo J."/>
            <person name="Berriman M."/>
            <person name="Abe K."/>
            <person name="Archer D.B."/>
            <person name="Bermejo C."/>
            <person name="Bennett J.W."/>
            <person name="Bowyer P."/>
            <person name="Chen D."/>
            <person name="Collins M."/>
            <person name="Coulsen R."/>
            <person name="Davies R."/>
            <person name="Dyer P.S."/>
            <person name="Farman M.L."/>
            <person name="Fedorova N."/>
            <person name="Fedorova N.D."/>
            <person name="Feldblyum T.V."/>
            <person name="Fischer R."/>
            <person name="Fosker N."/>
            <person name="Fraser A."/>
            <person name="Garcia J.L."/>
            <person name="Garcia M.J."/>
            <person name="Goble A."/>
            <person name="Goldman G.H."/>
            <person name="Gomi K."/>
            <person name="Griffith-Jones S."/>
            <person name="Gwilliam R."/>
            <person name="Haas B.J."/>
            <person name="Haas H."/>
            <person name="Harris D.E."/>
            <person name="Horiuchi H."/>
            <person name="Huang J."/>
            <person name="Humphray S."/>
            <person name="Jimenez J."/>
            <person name="Keller N."/>
            <person name="Khouri H."/>
            <person name="Kitamoto K."/>
            <person name="Kobayashi T."/>
            <person name="Konzack S."/>
            <person name="Kulkarni R."/>
            <person name="Kumagai T."/>
            <person name="Lafton A."/>
            <person name="Latge J.-P."/>
            <person name="Li W."/>
            <person name="Lord A."/>
            <person name="Lu C."/>
            <person name="Majoros W.H."/>
            <person name="May G.S."/>
            <person name="Miller B.L."/>
            <person name="Mohamoud Y."/>
            <person name="Molina M."/>
            <person name="Monod M."/>
            <person name="Mouyna I."/>
            <person name="Mulligan S."/>
            <person name="Murphy L.D."/>
            <person name="O'Neil S."/>
            <person name="Paulsen I."/>
            <person name="Penalva M.A."/>
            <person name="Pertea M."/>
            <person name="Price C."/>
            <person name="Pritchard B.L."/>
            <person name="Quail M.A."/>
            <person name="Rabbinowitsch E."/>
            <person name="Rawlins N."/>
            <person name="Rajandream M.A."/>
            <person name="Reichard U."/>
            <person name="Renauld H."/>
            <person name="Robson G.D."/>
            <person name="Rodriguez de Cordoba S."/>
            <person name="Rodriguez-Pena J.M."/>
            <person name="Ronning C.M."/>
            <person name="Rutter S."/>
            <person name="Salzberg S.L."/>
            <person name="Sanchez M."/>
            <person name="Sanchez-Ferrero J.C."/>
            <person name="Saunders D."/>
            <person name="Seeger K."/>
            <person name="Squares R."/>
            <person name="Squares S."/>
            <person name="Takeuchi M."/>
            <person name="Tekaia F."/>
            <person name="Turner G."/>
            <person name="Vazquez de Aldana C.R."/>
            <person name="Weidman J."/>
            <person name="White O."/>
            <person name="Woodward J.R."/>
            <person name="Yu J.-H."/>
            <person name="Fraser C.M."/>
            <person name="Galagan J.E."/>
            <person name="Asai K."/>
            <person name="Machida M."/>
            <person name="Hall N."/>
            <person name="Barrell B.G."/>
            <person name="Denning D.W."/>
        </authorList>
    </citation>
    <scope>NUCLEOTIDE SEQUENCE [LARGE SCALE GENOMIC DNA]</scope>
    <source>
        <strain>ATCC MYA-4609 / CBS 101355 / FGSC A1100 / Af293</strain>
    </source>
</reference>
<keyword id="KW-0472">Membrane</keyword>
<keyword id="KW-0539">Nucleus</keyword>
<keyword id="KW-1185">Reference proteome</keyword>
<keyword id="KW-0677">Repeat</keyword>
<keyword id="KW-0687">Ribonucleoprotein</keyword>
<keyword id="KW-0690">Ribosome biogenesis</keyword>
<keyword id="KW-0698">rRNA processing</keyword>
<keyword id="KW-0812">Transmembrane</keyword>
<keyword id="KW-1133">Transmembrane helix</keyword>
<dbReference type="EMBL" id="AAHF01000006">
    <property type="protein sequence ID" value="EAL89175.1"/>
    <property type="molecule type" value="Genomic_DNA"/>
</dbReference>
<dbReference type="RefSeq" id="XP_751213.1">
    <property type="nucleotide sequence ID" value="XM_746120.1"/>
</dbReference>
<dbReference type="SMR" id="Q4WLI9"/>
<dbReference type="FunCoup" id="Q4WLI9">
    <property type="interactions" value="1098"/>
</dbReference>
<dbReference type="STRING" id="330879.Q4WLI9"/>
<dbReference type="EnsemblFungi" id="EAL89175">
    <property type="protein sequence ID" value="EAL89175"/>
    <property type="gene ID" value="AFUA_6G13370"/>
</dbReference>
<dbReference type="GeneID" id="3508524"/>
<dbReference type="KEGG" id="afm:AFUA_6G13370"/>
<dbReference type="VEuPathDB" id="FungiDB:Afu6g13370"/>
<dbReference type="eggNOG" id="KOG1837">
    <property type="taxonomic scope" value="Eukaryota"/>
</dbReference>
<dbReference type="HOGENOM" id="CLU_001128_3_1_1"/>
<dbReference type="InParanoid" id="Q4WLI9"/>
<dbReference type="OMA" id="NDVMWKQ"/>
<dbReference type="OrthoDB" id="31183at2759"/>
<dbReference type="Proteomes" id="UP000002530">
    <property type="component" value="Chromosome 6"/>
</dbReference>
<dbReference type="GO" id="GO:0030686">
    <property type="term" value="C:90S preribosome"/>
    <property type="evidence" value="ECO:0000318"/>
    <property type="project" value="GO_Central"/>
</dbReference>
<dbReference type="GO" id="GO:0016020">
    <property type="term" value="C:membrane"/>
    <property type="evidence" value="ECO:0007669"/>
    <property type="project" value="UniProtKB-SubCell"/>
</dbReference>
<dbReference type="GO" id="GO:0032040">
    <property type="term" value="C:small-subunit processome"/>
    <property type="evidence" value="ECO:0000318"/>
    <property type="project" value="GO_Central"/>
</dbReference>
<dbReference type="GO" id="GO:0034455">
    <property type="term" value="C:t-UTP complex"/>
    <property type="evidence" value="ECO:0000318"/>
    <property type="project" value="GO_Central"/>
</dbReference>
<dbReference type="GO" id="GO:0030515">
    <property type="term" value="F:snoRNA binding"/>
    <property type="evidence" value="ECO:0000318"/>
    <property type="project" value="GO_Central"/>
</dbReference>
<dbReference type="GO" id="GO:0000462">
    <property type="term" value="P:maturation of SSU-rRNA from tricistronic rRNA transcript (SSU-rRNA, 5.8S rRNA, LSU-rRNA)"/>
    <property type="evidence" value="ECO:0000318"/>
    <property type="project" value="GO_Central"/>
</dbReference>
<dbReference type="GO" id="GO:0045943">
    <property type="term" value="P:positive regulation of transcription by RNA polymerase I"/>
    <property type="evidence" value="ECO:0000318"/>
    <property type="project" value="GO_Central"/>
</dbReference>
<dbReference type="Gene3D" id="1.25.10.10">
    <property type="entry name" value="Leucine-rich Repeat Variant"/>
    <property type="match status" value="3"/>
</dbReference>
<dbReference type="InterPro" id="IPR011989">
    <property type="entry name" value="ARM-like"/>
</dbReference>
<dbReference type="InterPro" id="IPR016024">
    <property type="entry name" value="ARM-type_fold"/>
</dbReference>
<dbReference type="InterPro" id="IPR012954">
    <property type="entry name" value="BP28_C_dom"/>
</dbReference>
<dbReference type="InterPro" id="IPR000357">
    <property type="entry name" value="HEAT"/>
</dbReference>
<dbReference type="InterPro" id="IPR021133">
    <property type="entry name" value="HEAT_type_2"/>
</dbReference>
<dbReference type="InterPro" id="IPR056473">
    <property type="entry name" value="HEAT_Utp10/HEAT1"/>
</dbReference>
<dbReference type="InterPro" id="IPR022125">
    <property type="entry name" value="U3snoRNP10_N"/>
</dbReference>
<dbReference type="InterPro" id="IPR040191">
    <property type="entry name" value="UTP10"/>
</dbReference>
<dbReference type="PANTHER" id="PTHR13457">
    <property type="entry name" value="BAP28"/>
    <property type="match status" value="1"/>
</dbReference>
<dbReference type="PANTHER" id="PTHR13457:SF1">
    <property type="entry name" value="HEAT REPEAT-CONTAINING PROTEIN 1"/>
    <property type="match status" value="1"/>
</dbReference>
<dbReference type="Pfam" id="PF08146">
    <property type="entry name" value="BP28CT"/>
    <property type="match status" value="1"/>
</dbReference>
<dbReference type="Pfam" id="PF02985">
    <property type="entry name" value="HEAT"/>
    <property type="match status" value="1"/>
</dbReference>
<dbReference type="Pfam" id="PF23243">
    <property type="entry name" value="HEAT_HEATR1"/>
    <property type="match status" value="1"/>
</dbReference>
<dbReference type="Pfam" id="PF12397">
    <property type="entry name" value="U3snoRNP10"/>
    <property type="match status" value="1"/>
</dbReference>
<dbReference type="SMART" id="SM01036">
    <property type="entry name" value="BP28CT"/>
    <property type="match status" value="1"/>
</dbReference>
<dbReference type="SUPFAM" id="SSF48371">
    <property type="entry name" value="ARM repeat"/>
    <property type="match status" value="3"/>
</dbReference>
<dbReference type="PROSITE" id="PS50077">
    <property type="entry name" value="HEAT_REPEAT"/>
    <property type="match status" value="2"/>
</dbReference>
<proteinExistence type="inferred from homology"/>
<gene>
    <name evidence="1" type="primary">utp10</name>
    <name type="ORF">AFUA_6G13370</name>
</gene>
<organism>
    <name type="scientific">Aspergillus fumigatus (strain ATCC MYA-4609 / CBS 101355 / FGSC A1100 / Af293)</name>
    <name type="common">Neosartorya fumigata</name>
    <dbReference type="NCBI Taxonomy" id="330879"/>
    <lineage>
        <taxon>Eukaryota</taxon>
        <taxon>Fungi</taxon>
        <taxon>Dikarya</taxon>
        <taxon>Ascomycota</taxon>
        <taxon>Pezizomycotina</taxon>
        <taxon>Eurotiomycetes</taxon>
        <taxon>Eurotiomycetidae</taxon>
        <taxon>Eurotiales</taxon>
        <taxon>Aspergillaceae</taxon>
        <taxon>Aspergillus</taxon>
        <taxon>Aspergillus subgen. Fumigati</taxon>
    </lineage>
</organism>
<sequence length="1798" mass="198998">MASSLAAQLSQIAAKSTNQLDLKAQRIAHSQSLIFDRKVASIQDFDTVYQICYEGFQELCQLDSRFTAFERTIFSEQSKAEDRTQLTAAQNKELDVALEAFLALVGGRLLLNPAIKAVEWLVRRFRIHEYNTSFTILTFLPYYTTPLFLNLLAILPEDLTPTFKVLIPYKKSSINPPRHPLVHSATTNKPFLAALNSYVLQVSRQQAHHHALLAFWAGVYTEAVAGMLDASRSGRREIEKQKHEDIVISVLPILNDGFAMKNVSELIIGCYMVSVVLAQKASLQDKVLDSLMEAVAGSWTEETVESGLVCLAVLAQQKPETKLPRRALKAILRLDDIFKRLTELATQYKTSHLLLGVVAGCLDDLPRQKDTARLDLLSQIFQNQLLGEPEMSKAMALVLEATSSVHKDGAMSLDAQARLADLVQVFSQSESLRPTFQKTIAESSFDIAALEHNLQTVIDTAPAPRTVEDVEMEDVEKEEEQDHFSSTVESLSGEKLFKGSFLSTQSIPLFEKLAQAFTLAIGSKEKCQTFSDLAALGKNEAEKSPQYLSFFIRVFSGPYSMGTRVTALNMITSFLTSTESTNLDFQALLPFLLVTLTDPSERVRREAAAALAAVGSLYKKNRKGEDIWARDNLYGQPKDIKWLPTRDAQKVFERAVLPSLEECIFDATHIGKVLENTLRGVSVDANASELKKPLRLAFFTFLCSHAIELPLFTPKLGLLNILNRIDKAGGTTRTKELEPLLKTWRGFSEREVQDICEKERVPVSDVERQMVAIVTPKEKDSIMILLSNVSSHSESLRPSFIAAVFGRIKDIWARVAEDRQTVAAEQLFDISLGLSDLPLVNNSRDLLRSVQLPGSVLAQFLERIPVSLTDMEALGPAPKRRRTSQNNMIAMTVKDEAEFGKVMEKMTFILELVDSSSPETHPELADGLFQTLAALHHFKSQIQSGMSYLLSLTLGSLLAIVNRSKESAKAQFDTSVIRADLVVDCVRTTESPQVQNAALLLVAGLSVIAPELVLHSVMPIFTFMGSSVLRKDDDYSVSVIDQTIDQVVPALIQSLRDQKRDVVSGTSELLLSFTAAFEHIPSHRRLRLFHALITKLGTQDFLFAVLAMLANRYAMDKDVLVLMTGLVSDASAPVELTTYSKFLGLVSDSLKPKPGISQVLLGIGSDDGREPQKVAVDLLRDLAYLFKHSSLKVKMAKTFASEDEEAIRQLRSTFSQILEQVLTIGDSVQSMKLVSQANGDVLAALFGTLTLVDFLDTIEVLLERPNDELRRKVLRLLEGRLRQNPERDSASQIRVLDFLPTLVDIIRNSTDILLKHAAVACIDRIAEKYGKKDPSRVIGAAQVVASEACIGQTDDRIRIMGVLCLASMAETLGQVMIPALPEALSRSLALLELSLEEGKENSRLHDAVFSLFSALFVHIPYMISGPHLDKILLLSFKSANAEECEDDSRQEALKMMARKVDMAATLGAVDRNWQYAVQAGPVATKETLEVVSLAVEKHPKSATGKNIGVLSSILFKAFDLRREQLALGANATFDAADVDETEDALNDVTIKMIYKLNDTTFRPIFTKMLDWATSGLPKKDTQGSLARLTAFYKFLQVFFGTLQSIVTGYASYIIESVVSVLGKASPADKSTKALWLATMRLLRNAFEHDQDEFWQSPSHLNQISTPLINQLAHATNSSTAATVIAEAVPAITELAVAADSTDNHKELNTALMKFLRPSAGPNGKPAGGENPHTRLAALKAEQSLTEQLGEEWLALLPEMLPYISELMEDEDENVEREVRKWVKQIENVLGEKLDDMLT</sequence>
<name>UTP10_ASPFU</name>